<keyword id="KW-1015">Disulfide bond</keyword>
<keyword id="KW-0325">Glycoprotein</keyword>
<keyword id="KW-1185">Reference proteome</keyword>
<keyword id="KW-0964">Secreted</keyword>
<keyword id="KW-0732">Signal</keyword>
<gene>
    <name evidence="4" type="primary">PRSS51</name>
</gene>
<protein>
    <recommendedName>
        <fullName evidence="3">Serine protease-like protein 51</fullName>
    </recommendedName>
</protein>
<sequence>MFQLLIPLLLALKGHAQDNPENVQCGHRPAFPNSSWLPFHERLQVQNGECPWQVSIQMSRKHLCGGSILHWWWVLTAAHCFRRTLLDMAVVNVTVVMGTRTFSNIHSERKQVQKEEERTWDWCWMAQWVTTNGYDQYDDLNMHLEKLRVVQISRKECAKRINQLSRNMICAWNEPGTNGIFKVLTPAQPPPPSRETVGHLWFVLFMEPRDSSKWVSSVGA</sequence>
<evidence type="ECO:0000255" key="1"/>
<evidence type="ECO:0000255" key="2">
    <source>
        <dbReference type="PROSITE-ProRule" id="PRU00274"/>
    </source>
</evidence>
<evidence type="ECO:0000305" key="3"/>
<evidence type="ECO:0000312" key="4">
    <source>
        <dbReference type="HGNC" id="HGNC:37321"/>
    </source>
</evidence>
<name>PRS51_HUMAN</name>
<reference key="1">
    <citation type="journal article" date="2006" name="Nature">
        <title>DNA sequence and analysis of human chromosome 8.</title>
        <authorList>
            <person name="Nusbaum C."/>
            <person name="Mikkelsen T.S."/>
            <person name="Zody M.C."/>
            <person name="Asakawa S."/>
            <person name="Taudien S."/>
            <person name="Garber M."/>
            <person name="Kodira C.D."/>
            <person name="Schueler M.G."/>
            <person name="Shimizu A."/>
            <person name="Whittaker C.A."/>
            <person name="Chang J.L."/>
            <person name="Cuomo C.A."/>
            <person name="Dewar K."/>
            <person name="FitzGerald M.G."/>
            <person name="Yang X."/>
            <person name="Allen N.R."/>
            <person name="Anderson S."/>
            <person name="Asakawa T."/>
            <person name="Blechschmidt K."/>
            <person name="Bloom T."/>
            <person name="Borowsky M.L."/>
            <person name="Butler J."/>
            <person name="Cook A."/>
            <person name="Corum B."/>
            <person name="DeArellano K."/>
            <person name="DeCaprio D."/>
            <person name="Dooley K.T."/>
            <person name="Dorris L. III"/>
            <person name="Engels R."/>
            <person name="Gloeckner G."/>
            <person name="Hafez N."/>
            <person name="Hagopian D.S."/>
            <person name="Hall J.L."/>
            <person name="Ishikawa S.K."/>
            <person name="Jaffe D.B."/>
            <person name="Kamat A."/>
            <person name="Kudoh J."/>
            <person name="Lehmann R."/>
            <person name="Lokitsang T."/>
            <person name="Macdonald P."/>
            <person name="Major J.E."/>
            <person name="Matthews C.D."/>
            <person name="Mauceli E."/>
            <person name="Menzel U."/>
            <person name="Mihalev A.H."/>
            <person name="Minoshima S."/>
            <person name="Murayama Y."/>
            <person name="Naylor J.W."/>
            <person name="Nicol R."/>
            <person name="Nguyen C."/>
            <person name="O'Leary S.B."/>
            <person name="O'Neill K."/>
            <person name="Parker S.C.J."/>
            <person name="Polley A."/>
            <person name="Raymond C.K."/>
            <person name="Reichwald K."/>
            <person name="Rodriguez J."/>
            <person name="Sasaki T."/>
            <person name="Schilhabel M."/>
            <person name="Siddiqui R."/>
            <person name="Smith C.L."/>
            <person name="Sneddon T.P."/>
            <person name="Talamas J.A."/>
            <person name="Tenzin P."/>
            <person name="Topham K."/>
            <person name="Venkataraman V."/>
            <person name="Wen G."/>
            <person name="Yamazaki S."/>
            <person name="Young S.K."/>
            <person name="Zeng Q."/>
            <person name="Zimmer A.R."/>
            <person name="Rosenthal A."/>
            <person name="Birren B.W."/>
            <person name="Platzer M."/>
            <person name="Shimizu N."/>
            <person name="Lander E.S."/>
        </authorList>
    </citation>
    <scope>NUCLEOTIDE SEQUENCE [LARGE SCALE GENOMIC DNA]</scope>
</reference>
<dbReference type="EMBL" id="AC104964">
    <property type="status" value="NOT_ANNOTATED_CDS"/>
    <property type="molecule type" value="Genomic_DNA"/>
</dbReference>
<dbReference type="FunCoup" id="A0A1B0GVH4">
    <property type="interactions" value="7"/>
</dbReference>
<dbReference type="GlyCosmos" id="A0A1B0GVH4">
    <property type="glycosylation" value="2 sites, No reported glycans"/>
</dbReference>
<dbReference type="GlyGen" id="A0A1B0GVH4">
    <property type="glycosylation" value="2 sites"/>
</dbReference>
<dbReference type="PhosphoSitePlus" id="A0A1B0GVH4"/>
<dbReference type="BioMuta" id="PRSS51"/>
<dbReference type="jPOST" id="A0A1B0GVH4"/>
<dbReference type="MassIVE" id="A0A1B0GVH4"/>
<dbReference type="PeptideAtlas" id="A0A1B0GVH4"/>
<dbReference type="Ensembl" id="ENST00000636217.1">
    <property type="protein sequence ID" value="ENSP00000490515.1"/>
    <property type="gene ID" value="ENSG00000253649.6"/>
</dbReference>
<dbReference type="AGR" id="HGNC:37321"/>
<dbReference type="GeneCards" id="PRSS51"/>
<dbReference type="HGNC" id="HGNC:37321">
    <property type="gene designation" value="PRSS51"/>
</dbReference>
<dbReference type="HPA" id="ENSG00000253649">
    <property type="expression patterns" value="Tissue enriched (brain)"/>
</dbReference>
<dbReference type="neXtProt" id="NX_A0A1B0GVH4"/>
<dbReference type="OpenTargets" id="ENSG00000253649"/>
<dbReference type="VEuPathDB" id="HostDB:ENSG00000253649"/>
<dbReference type="GeneTree" id="ENSGT00940000156020"/>
<dbReference type="InParanoid" id="A0A1B0GVH4"/>
<dbReference type="OrthoDB" id="546450at2759"/>
<dbReference type="PAN-GO" id="A0A1B0GVH4">
    <property type="GO annotations" value="0 GO annotations based on evolutionary models"/>
</dbReference>
<dbReference type="ChiTaRS" id="PRSS51">
    <property type="organism name" value="human"/>
</dbReference>
<dbReference type="Pharos" id="A0A1B0GVH4">
    <property type="development level" value="Tdark"/>
</dbReference>
<dbReference type="PRO" id="PR:A0A1B0GVH4"/>
<dbReference type="Proteomes" id="UP000005640">
    <property type="component" value="Chromosome 8"/>
</dbReference>
<dbReference type="RNAct" id="A0A1B0GVH4">
    <property type="molecule type" value="protein"/>
</dbReference>
<dbReference type="Bgee" id="ENSG00000253649">
    <property type="expression patterns" value="Expressed in male germ line stem cell (sensu Vertebrata) in testis and 95 other cell types or tissues"/>
</dbReference>
<dbReference type="ExpressionAtlas" id="A0A1B0GVH4">
    <property type="expression patterns" value="baseline and differential"/>
</dbReference>
<dbReference type="GO" id="GO:0005576">
    <property type="term" value="C:extracellular region"/>
    <property type="evidence" value="ECO:0007669"/>
    <property type="project" value="UniProtKB-SubCell"/>
</dbReference>
<dbReference type="GO" id="GO:0004252">
    <property type="term" value="F:serine-type endopeptidase activity"/>
    <property type="evidence" value="ECO:0007669"/>
    <property type="project" value="InterPro"/>
</dbReference>
<dbReference type="GO" id="GO:0006508">
    <property type="term" value="P:proteolysis"/>
    <property type="evidence" value="ECO:0007669"/>
    <property type="project" value="InterPro"/>
</dbReference>
<dbReference type="Gene3D" id="2.40.10.10">
    <property type="entry name" value="Trypsin-like serine proteases"/>
    <property type="match status" value="2"/>
</dbReference>
<dbReference type="InterPro" id="IPR009003">
    <property type="entry name" value="Peptidase_S1_PA"/>
</dbReference>
<dbReference type="InterPro" id="IPR043504">
    <property type="entry name" value="Peptidase_S1_PA_chymotrypsin"/>
</dbReference>
<dbReference type="InterPro" id="IPR001254">
    <property type="entry name" value="Trypsin_dom"/>
</dbReference>
<dbReference type="InterPro" id="IPR018114">
    <property type="entry name" value="TRYPSIN_HIS"/>
</dbReference>
<dbReference type="PANTHER" id="PTHR24252:SF8">
    <property type="entry name" value="ACROSIN"/>
    <property type="match status" value="1"/>
</dbReference>
<dbReference type="PANTHER" id="PTHR24252">
    <property type="entry name" value="ACROSIN-RELATED"/>
    <property type="match status" value="1"/>
</dbReference>
<dbReference type="Pfam" id="PF00089">
    <property type="entry name" value="Trypsin"/>
    <property type="match status" value="1"/>
</dbReference>
<dbReference type="SUPFAM" id="SSF50494">
    <property type="entry name" value="Trypsin-like serine proteases"/>
    <property type="match status" value="1"/>
</dbReference>
<dbReference type="PROSITE" id="PS00134">
    <property type="entry name" value="TRYPSIN_HIS"/>
    <property type="match status" value="1"/>
</dbReference>
<proteinExistence type="inferred from homology"/>
<comment type="subcellular location">
    <subcellularLocation>
        <location evidence="3">Secreted</location>
    </subcellularLocation>
</comment>
<comment type="similarity">
    <text evidence="2">Belongs to the peptidase S1 family.</text>
</comment>
<comment type="caution">
    <text evidence="3">Lacks essential residues of the catalytic triad and is therefore predicted to have no protease activity.</text>
</comment>
<organism>
    <name type="scientific">Homo sapiens</name>
    <name type="common">Human</name>
    <dbReference type="NCBI Taxonomy" id="9606"/>
    <lineage>
        <taxon>Eukaryota</taxon>
        <taxon>Metazoa</taxon>
        <taxon>Chordata</taxon>
        <taxon>Craniata</taxon>
        <taxon>Vertebrata</taxon>
        <taxon>Euteleostomi</taxon>
        <taxon>Mammalia</taxon>
        <taxon>Eutheria</taxon>
        <taxon>Euarchontoglires</taxon>
        <taxon>Primates</taxon>
        <taxon>Haplorrhini</taxon>
        <taxon>Catarrhini</taxon>
        <taxon>Hominidae</taxon>
        <taxon>Homo</taxon>
    </lineage>
</organism>
<feature type="signal peptide" evidence="1">
    <location>
        <begin position="1"/>
        <end position="16"/>
    </location>
</feature>
<feature type="chain" id="PRO_5008408658" description="Serine protease-like protein 51" evidence="1">
    <location>
        <begin position="17"/>
        <end position="220"/>
    </location>
</feature>
<feature type="domain" description="Peptidase S1" evidence="2">
    <location>
        <begin position="23"/>
        <end position="220"/>
    </location>
</feature>
<feature type="glycosylation site" description="N-linked (GlcNAc...) asparagine" evidence="1">
    <location>
        <position position="33"/>
    </location>
</feature>
<feature type="glycosylation site" description="N-linked (GlcNAc...) asparagine" evidence="1">
    <location>
        <position position="92"/>
    </location>
</feature>
<feature type="disulfide bond" evidence="2">
    <location>
        <begin position="64"/>
        <end position="80"/>
    </location>
</feature>
<feature type="disulfide bond" evidence="2">
    <location>
        <begin position="157"/>
        <end position="170"/>
    </location>
</feature>
<accession>A0A1B0GVH4</accession>